<organism>
    <name type="scientific">Pseudomonas carboxydohydrogena</name>
    <name type="common">Seliberia carboxydohydrogena</name>
    <dbReference type="NCBI Taxonomy" id="290"/>
    <lineage>
        <taxon>Bacteria</taxon>
        <taxon>Pseudomonadati</taxon>
        <taxon>Pseudomonadota</taxon>
        <taxon>Alphaproteobacteria</taxon>
        <taxon>Hyphomicrobiales</taxon>
        <taxon>Nitrobacteraceae</taxon>
        <taxon>Afipia</taxon>
    </lineage>
</organism>
<gene>
    <name type="primary">cutM</name>
</gene>
<reference key="1">
    <citation type="journal article" date="1989" name="Arch. Microbiol.">
        <title>Homology and distribution of CO dehydrogenase structural genes in carboxydotrophic bacteria.</title>
        <authorList>
            <person name="Kraut M."/>
            <person name="Hugendieck I."/>
            <person name="Herwig S."/>
            <person name="Meyer O."/>
        </authorList>
    </citation>
    <scope>PROTEIN SEQUENCE</scope>
</reference>
<keyword id="KW-0903">Direct protein sequencing</keyword>
<keyword id="KW-0274">FAD</keyword>
<keyword id="KW-0285">Flavoprotein</keyword>
<keyword id="KW-0560">Oxidoreductase</keyword>
<sequence>MMIPGHFDYHRPKSV</sequence>
<accession>P19917</accession>
<protein>
    <recommendedName>
        <fullName>Carbon monoxide dehydrogenase medium chain</fullName>
        <shortName>CO dehydrogenase subunit M</shortName>
        <shortName>CO-DH M</shortName>
        <ecNumber evidence="1">1.2.5.3</ecNumber>
    </recommendedName>
</protein>
<proteinExistence type="evidence at protein level"/>
<name>DCMM_PSECH</name>
<feature type="chain" id="PRO_0000079814" description="Carbon monoxide dehydrogenase medium chain">
    <location>
        <begin position="1"/>
        <end position="15" status="greater than"/>
    </location>
</feature>
<feature type="non-terminal residue">
    <location>
        <position position="15"/>
    </location>
</feature>
<dbReference type="EC" id="1.2.5.3" evidence="1"/>
<dbReference type="PIR" id="PL0143">
    <property type="entry name" value="PL0143"/>
</dbReference>
<dbReference type="GO" id="GO:0008805">
    <property type="term" value="F:carbon-monoxide oxygenase activity"/>
    <property type="evidence" value="ECO:0007669"/>
    <property type="project" value="UniProtKB-EC"/>
</dbReference>
<evidence type="ECO:0000250" key="1">
    <source>
        <dbReference type="UniProtKB" id="P19920"/>
    </source>
</evidence>
<comment type="function">
    <text evidence="1">Catalyzes the oxidation of carbon monoxide to carbon dioxide.</text>
</comment>
<comment type="catalytic activity">
    <reaction evidence="1">
        <text>CO + a quinone + H2O = a quinol + CO2</text>
        <dbReference type="Rhea" id="RHEA:48880"/>
        <dbReference type="ChEBI" id="CHEBI:15377"/>
        <dbReference type="ChEBI" id="CHEBI:16526"/>
        <dbReference type="ChEBI" id="CHEBI:17245"/>
        <dbReference type="ChEBI" id="CHEBI:24646"/>
        <dbReference type="ChEBI" id="CHEBI:132124"/>
        <dbReference type="EC" id="1.2.5.3"/>
    </reaction>
</comment>
<comment type="cofactor">
    <cofactor evidence="1">
        <name>FAD</name>
        <dbReference type="ChEBI" id="CHEBI:57692"/>
    </cofactor>
    <text evidence="1">Binds 1 FAD per subunit.</text>
</comment>
<comment type="subunit">
    <text evidence="1">Heterotrimer consisting of a large, a medium and a small subunit.</text>
</comment>